<feature type="chain" id="PRO_1000213586" description="UPF0201 protein M1425_1179">
    <location>
        <begin position="1"/>
        <end position="145"/>
    </location>
</feature>
<name>Y1179_SACI4</name>
<reference key="1">
    <citation type="journal article" date="2009" name="Proc. Natl. Acad. Sci. U.S.A.">
        <title>Biogeography of the Sulfolobus islandicus pan-genome.</title>
        <authorList>
            <person name="Reno M.L."/>
            <person name="Held N.L."/>
            <person name="Fields C.J."/>
            <person name="Burke P.V."/>
            <person name="Whitaker R.J."/>
        </authorList>
    </citation>
    <scope>NUCLEOTIDE SEQUENCE [LARGE SCALE GENOMIC DNA]</scope>
    <source>
        <strain>M.14.25 / Kamchatka #1</strain>
    </source>
</reference>
<gene>
    <name type="ordered locus">M1425_1179</name>
</gene>
<proteinExistence type="inferred from homology"/>
<accession>C3MYG1</accession>
<comment type="similarity">
    <text evidence="1">Belongs to the UPF0201 family.</text>
</comment>
<organism>
    <name type="scientific">Saccharolobus islandicus (strain M.14.25 / Kamchatka #1)</name>
    <name type="common">Sulfolobus islandicus</name>
    <dbReference type="NCBI Taxonomy" id="427317"/>
    <lineage>
        <taxon>Archaea</taxon>
        <taxon>Thermoproteota</taxon>
        <taxon>Thermoprotei</taxon>
        <taxon>Sulfolobales</taxon>
        <taxon>Sulfolobaceae</taxon>
        <taxon>Saccharolobus</taxon>
    </lineage>
</organism>
<dbReference type="EMBL" id="CP001400">
    <property type="protein sequence ID" value="ACP37940.1"/>
    <property type="molecule type" value="Genomic_DNA"/>
</dbReference>
<dbReference type="RefSeq" id="WP_012711201.1">
    <property type="nucleotide sequence ID" value="NC_012588.1"/>
</dbReference>
<dbReference type="SMR" id="C3MYG1"/>
<dbReference type="KEGG" id="sia:M1425_1179"/>
<dbReference type="HOGENOM" id="CLU_134829_1_0_2"/>
<dbReference type="Proteomes" id="UP000001350">
    <property type="component" value="Chromosome"/>
</dbReference>
<dbReference type="Gene3D" id="3.30.1440.10">
    <property type="match status" value="1"/>
</dbReference>
<dbReference type="HAMAP" id="MF_01112">
    <property type="entry name" value="UPF0201"/>
    <property type="match status" value="1"/>
</dbReference>
<dbReference type="InterPro" id="IPR002739">
    <property type="entry name" value="PAB1135-like"/>
</dbReference>
<dbReference type="InterPro" id="IPR022803">
    <property type="entry name" value="Ribosomal_uL5_dom_sf"/>
</dbReference>
<dbReference type="NCBIfam" id="NF001687">
    <property type="entry name" value="PRK00447.1"/>
    <property type="match status" value="1"/>
</dbReference>
<dbReference type="PANTHER" id="PTHR39652">
    <property type="entry name" value="UPF0201 PROTEIN TK1335"/>
    <property type="match status" value="1"/>
</dbReference>
<dbReference type="PANTHER" id="PTHR39652:SF1">
    <property type="entry name" value="UPF0201 PROTEIN TK1335"/>
    <property type="match status" value="1"/>
</dbReference>
<dbReference type="Pfam" id="PF01877">
    <property type="entry name" value="RNA_binding"/>
    <property type="match status" value="1"/>
</dbReference>
<dbReference type="SUPFAM" id="SSF55282">
    <property type="entry name" value="RL5-like"/>
    <property type="match status" value="1"/>
</dbReference>
<sequence>MVKVMVVAEVRPSEDVNKVLSAISNFFDFEKTNTRKEGIIDILVLEARTLKSLLKFHRVLRNERILDSARKYLMKGIEGNTIAFMIHKQAAAVGVLSFVDNDKESPLGAIKFYIEYQNPKEVVDWLAPRTAHGVPLWDNPIPPDV</sequence>
<protein>
    <recommendedName>
        <fullName evidence="1">UPF0201 protein M1425_1179</fullName>
    </recommendedName>
</protein>
<evidence type="ECO:0000255" key="1">
    <source>
        <dbReference type="HAMAP-Rule" id="MF_01112"/>
    </source>
</evidence>